<keyword id="KW-0963">Cytoplasm</keyword>
<keyword id="KW-0479">Metal-binding</keyword>
<keyword id="KW-1185">Reference proteome</keyword>
<keyword id="KW-0862">Zinc</keyword>
<proteinExistence type="inferred from homology"/>
<evidence type="ECO:0000255" key="1">
    <source>
        <dbReference type="HAMAP-Rule" id="MF_00746"/>
    </source>
</evidence>
<reference key="1">
    <citation type="journal article" date="2004" name="Proc. Natl. Acad. Sci. U.S.A.">
        <title>Genome sequence of the enterobacterial phytopathogen Erwinia carotovora subsp. atroseptica and characterization of virulence factors.</title>
        <authorList>
            <person name="Bell K.S."/>
            <person name="Sebaihia M."/>
            <person name="Pritchard L."/>
            <person name="Holden M.T.G."/>
            <person name="Hyman L.J."/>
            <person name="Holeva M.C."/>
            <person name="Thomson N.R."/>
            <person name="Bentley S.D."/>
            <person name="Churcher L.J.C."/>
            <person name="Mungall K."/>
            <person name="Atkin R."/>
            <person name="Bason N."/>
            <person name="Brooks K."/>
            <person name="Chillingworth T."/>
            <person name="Clark K."/>
            <person name="Doggett J."/>
            <person name="Fraser A."/>
            <person name="Hance Z."/>
            <person name="Hauser H."/>
            <person name="Jagels K."/>
            <person name="Moule S."/>
            <person name="Norbertczak H."/>
            <person name="Ormond D."/>
            <person name="Price C."/>
            <person name="Quail M.A."/>
            <person name="Sanders M."/>
            <person name="Walker D."/>
            <person name="Whitehead S."/>
            <person name="Salmond G.P.C."/>
            <person name="Birch P.R.J."/>
            <person name="Parkhill J."/>
            <person name="Toth I.K."/>
        </authorList>
    </citation>
    <scope>NUCLEOTIDE SEQUENCE [LARGE SCALE GENOMIC DNA]</scope>
    <source>
        <strain>SCRI 1043 / ATCC BAA-672</strain>
    </source>
</reference>
<protein>
    <recommendedName>
        <fullName evidence="1">Protein SprT</fullName>
    </recommendedName>
</protein>
<dbReference type="EMBL" id="BX950851">
    <property type="protein sequence ID" value="CAG76818.1"/>
    <property type="molecule type" value="Genomic_DNA"/>
</dbReference>
<dbReference type="RefSeq" id="WP_011095417.1">
    <property type="nucleotide sequence ID" value="NC_004547.2"/>
</dbReference>
<dbReference type="STRING" id="218491.ECA3921"/>
<dbReference type="DNASU" id="2884365"/>
<dbReference type="KEGG" id="eca:ECA3921"/>
<dbReference type="PATRIC" id="fig|218491.5.peg.3985"/>
<dbReference type="eggNOG" id="COG3091">
    <property type="taxonomic scope" value="Bacteria"/>
</dbReference>
<dbReference type="HOGENOM" id="CLU_113336_0_1_6"/>
<dbReference type="OrthoDB" id="267364at2"/>
<dbReference type="Proteomes" id="UP000007966">
    <property type="component" value="Chromosome"/>
</dbReference>
<dbReference type="GO" id="GO:0005737">
    <property type="term" value="C:cytoplasm"/>
    <property type="evidence" value="ECO:0007669"/>
    <property type="project" value="UniProtKB-SubCell"/>
</dbReference>
<dbReference type="GO" id="GO:0008270">
    <property type="term" value="F:zinc ion binding"/>
    <property type="evidence" value="ECO:0007669"/>
    <property type="project" value="UniProtKB-UniRule"/>
</dbReference>
<dbReference type="GO" id="GO:0006950">
    <property type="term" value="P:response to stress"/>
    <property type="evidence" value="ECO:0007669"/>
    <property type="project" value="UniProtKB-ARBA"/>
</dbReference>
<dbReference type="HAMAP" id="MF_00746">
    <property type="entry name" value="SprT"/>
    <property type="match status" value="1"/>
</dbReference>
<dbReference type="InterPro" id="IPR006640">
    <property type="entry name" value="SprT-like_domain"/>
</dbReference>
<dbReference type="InterPro" id="IPR035240">
    <property type="entry name" value="SprT_Zn_ribbon"/>
</dbReference>
<dbReference type="InterPro" id="IPR023483">
    <property type="entry name" value="Uncharacterised_SprT"/>
</dbReference>
<dbReference type="NCBIfam" id="NF003421">
    <property type="entry name" value="PRK04860.1"/>
    <property type="match status" value="1"/>
</dbReference>
<dbReference type="PANTHER" id="PTHR38773">
    <property type="entry name" value="PROTEIN SPRT"/>
    <property type="match status" value="1"/>
</dbReference>
<dbReference type="PANTHER" id="PTHR38773:SF1">
    <property type="entry name" value="PROTEIN SPRT"/>
    <property type="match status" value="1"/>
</dbReference>
<dbReference type="Pfam" id="PF10263">
    <property type="entry name" value="SprT-like"/>
    <property type="match status" value="1"/>
</dbReference>
<dbReference type="Pfam" id="PF17283">
    <property type="entry name" value="Zn_ribbon_SprT"/>
    <property type="match status" value="1"/>
</dbReference>
<dbReference type="SMART" id="SM00731">
    <property type="entry name" value="SprT"/>
    <property type="match status" value="1"/>
</dbReference>
<dbReference type="PROSITE" id="PS00142">
    <property type="entry name" value="ZINC_PROTEASE"/>
    <property type="match status" value="1"/>
</dbReference>
<accession>Q6D080</accession>
<comment type="cofactor">
    <cofactor evidence="1">
        <name>Zn(2+)</name>
        <dbReference type="ChEBI" id="CHEBI:29105"/>
    </cofactor>
    <text evidence="1">Binds 1 zinc ion.</text>
</comment>
<comment type="subcellular location">
    <subcellularLocation>
        <location evidence="1">Cytoplasm</location>
    </subcellularLocation>
</comment>
<comment type="similarity">
    <text evidence="1">Belongs to the SprT family.</text>
</comment>
<feature type="chain" id="PRO_1000046528" description="Protein SprT">
    <location>
        <begin position="1"/>
        <end position="170"/>
    </location>
</feature>
<feature type="domain" description="SprT-like" evidence="1">
    <location>
        <begin position="22"/>
        <end position="163"/>
    </location>
</feature>
<feature type="active site" evidence="1">
    <location>
        <position position="79"/>
    </location>
</feature>
<feature type="binding site" evidence="1">
    <location>
        <position position="78"/>
    </location>
    <ligand>
        <name>Zn(2+)</name>
        <dbReference type="ChEBI" id="CHEBI:29105"/>
    </ligand>
</feature>
<feature type="binding site" evidence="1">
    <location>
        <position position="82"/>
    </location>
    <ligand>
        <name>Zn(2+)</name>
        <dbReference type="ChEBI" id="CHEBI:29105"/>
    </ligand>
</feature>
<organism>
    <name type="scientific">Pectobacterium atrosepticum (strain SCRI 1043 / ATCC BAA-672)</name>
    <name type="common">Erwinia carotovora subsp. atroseptica</name>
    <dbReference type="NCBI Taxonomy" id="218491"/>
    <lineage>
        <taxon>Bacteria</taxon>
        <taxon>Pseudomonadati</taxon>
        <taxon>Pseudomonadota</taxon>
        <taxon>Gammaproteobacteria</taxon>
        <taxon>Enterobacterales</taxon>
        <taxon>Pectobacteriaceae</taxon>
        <taxon>Pectobacterium</taxon>
    </lineage>
</organism>
<gene>
    <name evidence="1" type="primary">sprT</name>
    <name type="ordered locus">ECA3921</name>
</gene>
<sequence>MNTPRIPIASHQAVMRCLRDKLQQANLTLQTDYTEPAVSYQQRGATAGTAWLQHWEIRLNPVLLQENQQTFIDEVVPHELAHLLVYARFGRVAPHGKEWRWMMENVLHVPAKRTHRFAVQSVQGKTFTYLCDCQRHELTIRRHNRVLRGETEYRCRRCGKTLRHDVKSSI</sequence>
<name>SPRT_PECAS</name>